<reference key="1">
    <citation type="journal article" date="2000" name="Nucleic Acids Res.">
        <title>Complete genome sequence of the alkaliphilic bacterium Bacillus halodurans and genomic sequence comparison with Bacillus subtilis.</title>
        <authorList>
            <person name="Takami H."/>
            <person name="Nakasone K."/>
            <person name="Takaki Y."/>
            <person name="Maeno G."/>
            <person name="Sasaki R."/>
            <person name="Masui N."/>
            <person name="Fuji F."/>
            <person name="Hirama C."/>
            <person name="Nakamura Y."/>
            <person name="Ogasawara N."/>
            <person name="Kuhara S."/>
            <person name="Horikoshi K."/>
        </authorList>
    </citation>
    <scope>NUCLEOTIDE SEQUENCE [LARGE SCALE GENOMIC DNA]</scope>
    <source>
        <strain>ATCC BAA-125 / DSM 18197 / FERM 7344 / JCM 9153 / C-125</strain>
    </source>
</reference>
<feature type="chain" id="PRO_0000083639" description="3-isopropylmalate dehydrogenase">
    <location>
        <begin position="1"/>
        <end position="363"/>
    </location>
</feature>
<feature type="binding site" evidence="1">
    <location>
        <begin position="76"/>
        <end position="89"/>
    </location>
    <ligand>
        <name>NAD(+)</name>
        <dbReference type="ChEBI" id="CHEBI:57540"/>
    </ligand>
</feature>
<feature type="binding site" evidence="1">
    <location>
        <position position="96"/>
    </location>
    <ligand>
        <name>substrate</name>
    </ligand>
</feature>
<feature type="binding site" evidence="1">
    <location>
        <position position="106"/>
    </location>
    <ligand>
        <name>substrate</name>
    </ligand>
</feature>
<feature type="binding site" evidence="1">
    <location>
        <position position="134"/>
    </location>
    <ligand>
        <name>substrate</name>
    </ligand>
</feature>
<feature type="binding site" evidence="1">
    <location>
        <position position="223"/>
    </location>
    <ligand>
        <name>Mg(2+)</name>
        <dbReference type="ChEBI" id="CHEBI:18420"/>
    </ligand>
</feature>
<feature type="binding site" evidence="1">
    <location>
        <position position="223"/>
    </location>
    <ligand>
        <name>substrate</name>
    </ligand>
</feature>
<feature type="binding site" evidence="1">
    <location>
        <position position="247"/>
    </location>
    <ligand>
        <name>Mg(2+)</name>
        <dbReference type="ChEBI" id="CHEBI:18420"/>
    </ligand>
</feature>
<feature type="binding site" evidence="1">
    <location>
        <position position="251"/>
    </location>
    <ligand>
        <name>Mg(2+)</name>
        <dbReference type="ChEBI" id="CHEBI:18420"/>
    </ligand>
</feature>
<feature type="binding site" evidence="1">
    <location>
        <begin position="281"/>
        <end position="293"/>
    </location>
    <ligand>
        <name>NAD(+)</name>
        <dbReference type="ChEBI" id="CHEBI:57540"/>
    </ligand>
</feature>
<feature type="site" description="Important for catalysis" evidence="1">
    <location>
        <position position="141"/>
    </location>
</feature>
<feature type="site" description="Important for catalysis" evidence="1">
    <location>
        <position position="191"/>
    </location>
</feature>
<sequence>MEKQIAVLPGDGIGPEVTDAAIEVLQAVADRFGHTFSYKKALLGGCAIDEVGTPLPEETLDVCRHADGILLGAVGGPKWDTLPGHLRPEKGLLGLRKGLNLFANLRPVTVYDSLADASTLKNDVIDGVDLLIVRELTGGLYFGEPRERRGEGETEEVVDTLLYTRGEMRRIIRKAFELAMVRNKHVTSVDKANVLESSRMWREVANEVAQEFPEVTLEHMLVDNAAMQLIRRPKQFDVLVTENLFGDILSDEASMVTGSLGMLPSASLTSDGPGLYEPIHGSAPDIAGKGVANPLATIASCAMMLKYSFGLHEEAKTIEDAIEAVLKQGYRTADIAKPGEESSSTKAITDAVVEAIQASVDIS</sequence>
<gene>
    <name evidence="1" type="primary">leuB</name>
    <name type="ordered locus">BH3057</name>
</gene>
<evidence type="ECO:0000255" key="1">
    <source>
        <dbReference type="HAMAP-Rule" id="MF_01033"/>
    </source>
</evidence>
<dbReference type="EC" id="1.1.1.85" evidence="1"/>
<dbReference type="EMBL" id="BA000004">
    <property type="protein sequence ID" value="BAB06776.1"/>
    <property type="molecule type" value="Genomic_DNA"/>
</dbReference>
<dbReference type="PIR" id="A84032">
    <property type="entry name" value="A84032"/>
</dbReference>
<dbReference type="RefSeq" id="WP_010899201.1">
    <property type="nucleotide sequence ID" value="NC_002570.2"/>
</dbReference>
<dbReference type="SMR" id="Q9K8E9"/>
<dbReference type="STRING" id="272558.gene:10728967"/>
<dbReference type="GeneID" id="87598579"/>
<dbReference type="KEGG" id="bha:BH3057"/>
<dbReference type="eggNOG" id="COG0473">
    <property type="taxonomic scope" value="Bacteria"/>
</dbReference>
<dbReference type="HOGENOM" id="CLU_031953_0_3_9"/>
<dbReference type="OrthoDB" id="9806254at2"/>
<dbReference type="UniPathway" id="UPA00048">
    <property type="reaction ID" value="UER00072"/>
</dbReference>
<dbReference type="Proteomes" id="UP000001258">
    <property type="component" value="Chromosome"/>
</dbReference>
<dbReference type="GO" id="GO:0005829">
    <property type="term" value="C:cytosol"/>
    <property type="evidence" value="ECO:0007669"/>
    <property type="project" value="TreeGrafter"/>
</dbReference>
<dbReference type="GO" id="GO:0003862">
    <property type="term" value="F:3-isopropylmalate dehydrogenase activity"/>
    <property type="evidence" value="ECO:0007669"/>
    <property type="project" value="UniProtKB-UniRule"/>
</dbReference>
<dbReference type="GO" id="GO:0000287">
    <property type="term" value="F:magnesium ion binding"/>
    <property type="evidence" value="ECO:0007669"/>
    <property type="project" value="InterPro"/>
</dbReference>
<dbReference type="GO" id="GO:0051287">
    <property type="term" value="F:NAD binding"/>
    <property type="evidence" value="ECO:0007669"/>
    <property type="project" value="InterPro"/>
</dbReference>
<dbReference type="GO" id="GO:0009098">
    <property type="term" value="P:L-leucine biosynthetic process"/>
    <property type="evidence" value="ECO:0007669"/>
    <property type="project" value="UniProtKB-UniRule"/>
</dbReference>
<dbReference type="FunFam" id="3.40.718.10:FF:000028">
    <property type="entry name" value="3-isopropylmalate dehydrogenase"/>
    <property type="match status" value="1"/>
</dbReference>
<dbReference type="Gene3D" id="3.40.718.10">
    <property type="entry name" value="Isopropylmalate Dehydrogenase"/>
    <property type="match status" value="1"/>
</dbReference>
<dbReference type="HAMAP" id="MF_01033">
    <property type="entry name" value="LeuB_type1"/>
    <property type="match status" value="1"/>
</dbReference>
<dbReference type="InterPro" id="IPR019818">
    <property type="entry name" value="IsoCit/isopropylmalate_DH_CS"/>
</dbReference>
<dbReference type="InterPro" id="IPR024084">
    <property type="entry name" value="IsoPropMal-DH-like_dom"/>
</dbReference>
<dbReference type="InterPro" id="IPR004429">
    <property type="entry name" value="Isopropylmalate_DH"/>
</dbReference>
<dbReference type="NCBIfam" id="TIGR00169">
    <property type="entry name" value="leuB"/>
    <property type="match status" value="1"/>
</dbReference>
<dbReference type="PANTHER" id="PTHR42979">
    <property type="entry name" value="3-ISOPROPYLMALATE DEHYDROGENASE"/>
    <property type="match status" value="1"/>
</dbReference>
<dbReference type="PANTHER" id="PTHR42979:SF1">
    <property type="entry name" value="3-ISOPROPYLMALATE DEHYDROGENASE"/>
    <property type="match status" value="1"/>
</dbReference>
<dbReference type="Pfam" id="PF00180">
    <property type="entry name" value="Iso_dh"/>
    <property type="match status" value="1"/>
</dbReference>
<dbReference type="SMART" id="SM01329">
    <property type="entry name" value="Iso_dh"/>
    <property type="match status" value="1"/>
</dbReference>
<dbReference type="SUPFAM" id="SSF53659">
    <property type="entry name" value="Isocitrate/Isopropylmalate dehydrogenase-like"/>
    <property type="match status" value="1"/>
</dbReference>
<dbReference type="PROSITE" id="PS00470">
    <property type="entry name" value="IDH_IMDH"/>
    <property type="match status" value="1"/>
</dbReference>
<name>LEU3_HALH5</name>
<keyword id="KW-0028">Amino-acid biosynthesis</keyword>
<keyword id="KW-0100">Branched-chain amino acid biosynthesis</keyword>
<keyword id="KW-0963">Cytoplasm</keyword>
<keyword id="KW-0432">Leucine biosynthesis</keyword>
<keyword id="KW-0460">Magnesium</keyword>
<keyword id="KW-0464">Manganese</keyword>
<keyword id="KW-0479">Metal-binding</keyword>
<keyword id="KW-0520">NAD</keyword>
<keyword id="KW-0560">Oxidoreductase</keyword>
<keyword id="KW-1185">Reference proteome</keyword>
<proteinExistence type="inferred from homology"/>
<organism>
    <name type="scientific">Halalkalibacterium halodurans (strain ATCC BAA-125 / DSM 18197 / FERM 7344 / JCM 9153 / C-125)</name>
    <name type="common">Bacillus halodurans</name>
    <dbReference type="NCBI Taxonomy" id="272558"/>
    <lineage>
        <taxon>Bacteria</taxon>
        <taxon>Bacillati</taxon>
        <taxon>Bacillota</taxon>
        <taxon>Bacilli</taxon>
        <taxon>Bacillales</taxon>
        <taxon>Bacillaceae</taxon>
        <taxon>Halalkalibacterium (ex Joshi et al. 2022)</taxon>
    </lineage>
</organism>
<accession>Q9K8E9</accession>
<protein>
    <recommendedName>
        <fullName evidence="1">3-isopropylmalate dehydrogenase</fullName>
        <ecNumber evidence="1">1.1.1.85</ecNumber>
    </recommendedName>
    <alternativeName>
        <fullName evidence="1">3-IPM-DH</fullName>
    </alternativeName>
    <alternativeName>
        <fullName evidence="1">Beta-IPM dehydrogenase</fullName>
        <shortName evidence="1">IMDH</shortName>
    </alternativeName>
</protein>
<comment type="function">
    <text evidence="1">Catalyzes the oxidation of 3-carboxy-2-hydroxy-4-methylpentanoate (3-isopropylmalate) to 3-carboxy-4-methyl-2-oxopentanoate. The product decarboxylates to 4-methyl-2 oxopentanoate.</text>
</comment>
<comment type="catalytic activity">
    <reaction evidence="1">
        <text>(2R,3S)-3-isopropylmalate + NAD(+) = 4-methyl-2-oxopentanoate + CO2 + NADH</text>
        <dbReference type="Rhea" id="RHEA:32271"/>
        <dbReference type="ChEBI" id="CHEBI:16526"/>
        <dbReference type="ChEBI" id="CHEBI:17865"/>
        <dbReference type="ChEBI" id="CHEBI:35121"/>
        <dbReference type="ChEBI" id="CHEBI:57540"/>
        <dbReference type="ChEBI" id="CHEBI:57945"/>
        <dbReference type="EC" id="1.1.1.85"/>
    </reaction>
</comment>
<comment type="cofactor">
    <cofactor evidence="1">
        <name>Mg(2+)</name>
        <dbReference type="ChEBI" id="CHEBI:18420"/>
    </cofactor>
    <cofactor evidence="1">
        <name>Mn(2+)</name>
        <dbReference type="ChEBI" id="CHEBI:29035"/>
    </cofactor>
    <text evidence="1">Binds 1 Mg(2+) or Mn(2+) ion per subunit.</text>
</comment>
<comment type="pathway">
    <text evidence="1">Amino-acid biosynthesis; L-leucine biosynthesis; L-leucine from 3-methyl-2-oxobutanoate: step 3/4.</text>
</comment>
<comment type="subunit">
    <text evidence="1">Homodimer.</text>
</comment>
<comment type="subcellular location">
    <subcellularLocation>
        <location evidence="1">Cytoplasm</location>
    </subcellularLocation>
</comment>
<comment type="similarity">
    <text evidence="1">Belongs to the isocitrate and isopropylmalate dehydrogenases family. LeuB type 1 subfamily.</text>
</comment>